<gene>
    <name evidence="3" type="primary">POL</name>
</gene>
<dbReference type="EC" id="2.7.7.7" evidence="3"/>
<dbReference type="EMBL" id="U77082">
    <property type="protein sequence ID" value="AAB38716.1"/>
    <property type="molecule type" value="Genomic_DNA"/>
</dbReference>
<dbReference type="RefSeq" id="AP_000613.1">
    <property type="nucleotide sequence ID" value="AC_000020.1"/>
</dbReference>
<dbReference type="Proteomes" id="UP000118097">
    <property type="component" value="Segment"/>
</dbReference>
<dbReference type="GO" id="GO:0042025">
    <property type="term" value="C:host cell nucleus"/>
    <property type="evidence" value="ECO:0007669"/>
    <property type="project" value="UniProtKB-SubCell"/>
</dbReference>
<dbReference type="GO" id="GO:0008408">
    <property type="term" value="F:3'-5' exonuclease activity"/>
    <property type="evidence" value="ECO:0007669"/>
    <property type="project" value="UniProtKB-UniRule"/>
</dbReference>
<dbReference type="GO" id="GO:0003677">
    <property type="term" value="F:DNA binding"/>
    <property type="evidence" value="ECO:0007669"/>
    <property type="project" value="UniProtKB-UniRule"/>
</dbReference>
<dbReference type="GO" id="GO:0003887">
    <property type="term" value="F:DNA-directed DNA polymerase activity"/>
    <property type="evidence" value="ECO:0007669"/>
    <property type="project" value="UniProtKB-UniRule"/>
</dbReference>
<dbReference type="GO" id="GO:0000166">
    <property type="term" value="F:nucleotide binding"/>
    <property type="evidence" value="ECO:0007669"/>
    <property type="project" value="UniProtKB-UniRule"/>
</dbReference>
<dbReference type="GO" id="GO:0006261">
    <property type="term" value="P:DNA-templated DNA replication"/>
    <property type="evidence" value="ECO:0007669"/>
    <property type="project" value="UniProtKB-UniRule"/>
</dbReference>
<dbReference type="GO" id="GO:0039693">
    <property type="term" value="P:viral DNA genome replication"/>
    <property type="evidence" value="ECO:0007669"/>
    <property type="project" value="UniProtKB-UniRule"/>
</dbReference>
<dbReference type="HAMAP" id="MF_04055">
    <property type="entry name" value="ADV_DPOL"/>
    <property type="match status" value="1"/>
</dbReference>
<dbReference type="InterPro" id="IPR006172">
    <property type="entry name" value="DNA-dir_DNA_pol_B"/>
</dbReference>
<dbReference type="InterPro" id="IPR014382">
    <property type="entry name" value="DNA-dir_DNA_pol_B_adenovir"/>
</dbReference>
<dbReference type="InterPro" id="IPR017964">
    <property type="entry name" value="DNA-dir_DNA_pol_B_CS"/>
</dbReference>
<dbReference type="InterPro" id="IPR004868">
    <property type="entry name" value="DNA-dir_DNA_pol_B_mt/vir"/>
</dbReference>
<dbReference type="InterPro" id="IPR043502">
    <property type="entry name" value="DNA/RNA_pol_sf"/>
</dbReference>
<dbReference type="InterPro" id="IPR012337">
    <property type="entry name" value="RNaseH-like_sf"/>
</dbReference>
<dbReference type="PANTHER" id="PTHR33568">
    <property type="entry name" value="DNA POLYMERASE"/>
    <property type="match status" value="1"/>
</dbReference>
<dbReference type="PANTHER" id="PTHR33568:SF3">
    <property type="entry name" value="DNA-DIRECTED DNA POLYMERASE"/>
    <property type="match status" value="1"/>
</dbReference>
<dbReference type="Pfam" id="PF03175">
    <property type="entry name" value="DNA_pol_B_2"/>
    <property type="match status" value="1"/>
</dbReference>
<dbReference type="PIRSF" id="PIRSF000788">
    <property type="entry name" value="DPol_ADV"/>
    <property type="match status" value="1"/>
</dbReference>
<dbReference type="PRINTS" id="PR00106">
    <property type="entry name" value="DNAPOLB"/>
</dbReference>
<dbReference type="SMART" id="SM00486">
    <property type="entry name" value="POLBc"/>
    <property type="match status" value="1"/>
</dbReference>
<dbReference type="SUPFAM" id="SSF56672">
    <property type="entry name" value="DNA/RNA polymerases"/>
    <property type="match status" value="1"/>
</dbReference>
<dbReference type="SUPFAM" id="SSF53098">
    <property type="entry name" value="Ribonuclease H-like"/>
    <property type="match status" value="1"/>
</dbReference>
<dbReference type="PROSITE" id="PS00116">
    <property type="entry name" value="DNA_POLYMERASE_B"/>
    <property type="match status" value="1"/>
</dbReference>
<comment type="function">
    <text evidence="1 2 3">Eukaryotic-type DNA polymerase involved in viral genomic replication. DNA synthesis is protein primed, and acts in a strand displacement replication. Assembles in complex with viral pTP, DBP, host NFIA and host POU2F1/OCT1 on viral origin of replication. The polymerase covalently transfers dCMP onto pTP, thereby initiating complementary strand synthesis.</text>
</comment>
<comment type="catalytic activity">
    <reaction evidence="3">
        <text>DNA(n) + a 2'-deoxyribonucleoside 5'-triphosphate = DNA(n+1) + diphosphate</text>
        <dbReference type="Rhea" id="RHEA:22508"/>
        <dbReference type="Rhea" id="RHEA-COMP:17339"/>
        <dbReference type="Rhea" id="RHEA-COMP:17340"/>
        <dbReference type="ChEBI" id="CHEBI:33019"/>
        <dbReference type="ChEBI" id="CHEBI:61560"/>
        <dbReference type="ChEBI" id="CHEBI:173112"/>
        <dbReference type="EC" id="2.7.7.7"/>
    </reaction>
</comment>
<comment type="subunit">
    <text evidence="2 3">Heterodimer with the terminal protein; this heterodimer binds to bp 9 to 18 of the genome. Forms a complex with viral pTP, DBP and hosts NFIA and POU2F1/OCT1 for initiation of replication.</text>
</comment>
<comment type="subcellular location">
    <subcellularLocation>
        <location evidence="1 3">Host nucleus</location>
    </subcellularLocation>
</comment>
<comment type="miscellaneous">
    <text evidence="3">This DNA polymerase requires a protein as a primer.</text>
</comment>
<comment type="similarity">
    <text evidence="3 5">Belongs to the DNA polymerase type-B family.</text>
</comment>
<evidence type="ECO:0000250" key="1">
    <source>
        <dbReference type="UniProtKB" id="P03261"/>
    </source>
</evidence>
<evidence type="ECO:0000250" key="2">
    <source>
        <dbReference type="UniProtKB" id="P04495"/>
    </source>
</evidence>
<evidence type="ECO:0000255" key="3">
    <source>
        <dbReference type="HAMAP-Rule" id="MF_04055"/>
    </source>
</evidence>
<evidence type="ECO:0000256" key="4">
    <source>
        <dbReference type="SAM" id="MobiDB-lite"/>
    </source>
</evidence>
<evidence type="ECO:0000305" key="5"/>
<proteinExistence type="inferred from homology"/>
<keyword id="KW-0235">DNA replication</keyword>
<keyword id="KW-0238">DNA-binding</keyword>
<keyword id="KW-0239">DNA-directed DNA polymerase</keyword>
<keyword id="KW-1048">Host nucleus</keyword>
<keyword id="KW-0548">Nucleotidyltransferase</keyword>
<keyword id="KW-1185">Reference proteome</keyword>
<keyword id="KW-0808">Transferase</keyword>
<keyword id="KW-1194">Viral DNA replication</keyword>
<organismHost>
    <name type="scientific">Canis lupus familiaris</name>
    <name type="common">Dog</name>
    <name type="synonym">Canis familiaris</name>
    <dbReference type="NCBI Taxonomy" id="9615"/>
</organismHost>
<reference key="1">
    <citation type="submission" date="1996-12" db="EMBL/GenBank/DDBJ databases">
        <title>Complete DNA sequence and genomic organization of canine adenovirus type 2.</title>
        <authorList>
            <person name="Campbell J.B."/>
            <person name="Zhao Y."/>
        </authorList>
    </citation>
    <scope>NUCLEOTIDE SEQUENCE [LARGE SCALE GENOMIC DNA]</scope>
</reference>
<sequence>MSLVQGHGTSGLFTEPPNPINQQESSGPSLPAQDAAQAFASSPRAGATSTIVNPPKRKYKGAVVVQRATLSISAVLDNGQCVEIKYHSNLASALTNLCNTNLYDLPACLNRPITAHNLPALIEEAAAPYSLICYYQRGTVRRVEFQAEVPLLSFPLKFLVKQGKVFLIKDISQMQKCEFCGSFFKVTHTCALRRRDFYFHHVAAHSADWWEKISFTPIGAPPNTERLFIVYDVETYTWHGKFGKQLVPFMLVFQLLGDDHLVNVAKTLATEQNWEIWNGKEQDTLYYCITPEKRAIGVKFKKFRDTLQQHIAASLWSHVICQNPQLQEKATTLGLESPEELTPDQLKKFKLKGNPRFIEVYAVGHNITGFDEILLAAQVVSTRAEIPPVFEICRNFMPRAGRLLFNDITYSLPNPSYVPAKSYEHWEQGQVLASDLKSQYIKFMVRDTFSLTHTSLKNAAKAYSLTVSKGCCPYQAVNEFYMLGSYQQDADGFPDLKYWKDQEEYSFNKDLWIKEKKGAYDIIQQTLDYCALDVQVTAQLVNKLIESYQIFIKNSVNLPETSFNVFQRPTISSNSHAIFKQILYKAEKPNTHHLSTILMAPSNEMYEYVRLSIRGGRCYPTYIGVLQEPVFVYDICGMYASALTHPFPAGSPLNPYERALAIKAYEQKMLNHKTISYFDKDLLPGIFTIDADPPAEEFLDVLPPFCSRKGGRLCWTNEPLRGEIATSIDVITLHNRGWKVTLIPDTRTTVFPEWKCLAREYVQLNISAKEEADKSKNQTMRSIAKLLSNALYGSFATKLDNKKTVFSDQIESNIAKEIASGAYVVKSSSYIETDNLCAEIMPEFVVAYPPVNSDVRQLAPPSCSEEDPTKDPLAEAPFMHNFSMTSYHYKPIMFIDAEDDDFCLHTLEKSTPLIANNRYPSQIASFVLAWTRAFVSEWSQFLYENDAGTPLENRVLKSVYGDTDSLFTTMEGYKLMEEKGKKRLKKNGGKLVFDPSNPELTWLVECETQCEKCGSDAYSSESVYLAPKLYALKDTTCPKCHHVGKGKLRAKGHATSTLSYDVLKACYYADMQQGSDVFKTSRMSLRRTLTSVQAHVQPFTVTETTLTRKLRPWKDKTLHALDMHRLIPYSRKHPNPRNTETTWMELQWMT</sequence>
<accession>P87553</accession>
<name>DPOL_ADECT</name>
<organism>
    <name type="scientific">Canine adenovirus serotype 2 (strain Toronto A 26-61)</name>
    <name type="common">CAdV-2</name>
    <name type="synonym">Canine adenovirus 2 (strain Toronto A 26-61)</name>
    <dbReference type="NCBI Taxonomy" id="69152"/>
    <lineage>
        <taxon>Viruses</taxon>
        <taxon>Varidnaviria</taxon>
        <taxon>Bamfordvirae</taxon>
        <taxon>Preplasmiviricota</taxon>
        <taxon>Tectiliviricetes</taxon>
        <taxon>Rowavirales</taxon>
        <taxon>Adenoviridae</taxon>
        <taxon>Mastadenovirus</taxon>
        <taxon>Canine mastadenovirus A</taxon>
    </lineage>
</organism>
<feature type="chain" id="PRO_0000046499" description="DNA polymerase">
    <location>
        <begin position="1"/>
        <end position="1150"/>
    </location>
</feature>
<feature type="region of interest" description="Disordered" evidence="4">
    <location>
        <begin position="1"/>
        <end position="53"/>
    </location>
</feature>
<protein>
    <recommendedName>
        <fullName evidence="3">DNA polymerase</fullName>
        <ecNumber evidence="3">2.7.7.7</ecNumber>
    </recommendedName>
</protein>